<feature type="chain" id="PRO_0000258858" description="UPF0301 protein PSPPH_0476">
    <location>
        <begin position="1"/>
        <end position="190"/>
    </location>
</feature>
<proteinExistence type="inferred from homology"/>
<evidence type="ECO:0000255" key="1">
    <source>
        <dbReference type="HAMAP-Rule" id="MF_00758"/>
    </source>
</evidence>
<accession>Q48P90</accession>
<gene>
    <name type="ordered locus">PSPPH_0476</name>
</gene>
<protein>
    <recommendedName>
        <fullName evidence="1">UPF0301 protein PSPPH_0476</fullName>
    </recommendedName>
</protein>
<organism>
    <name type="scientific">Pseudomonas savastanoi pv. phaseolicola (strain 1448A / Race 6)</name>
    <name type="common">Pseudomonas syringae pv. phaseolicola (strain 1448A / Race 6)</name>
    <dbReference type="NCBI Taxonomy" id="264730"/>
    <lineage>
        <taxon>Bacteria</taxon>
        <taxon>Pseudomonadati</taxon>
        <taxon>Pseudomonadota</taxon>
        <taxon>Gammaproteobacteria</taxon>
        <taxon>Pseudomonadales</taxon>
        <taxon>Pseudomonadaceae</taxon>
        <taxon>Pseudomonas</taxon>
    </lineage>
</organism>
<reference key="1">
    <citation type="journal article" date="2005" name="J. Bacteriol.">
        <title>Whole-genome sequence analysis of Pseudomonas syringae pv. phaseolicola 1448A reveals divergence among pathovars in genes involved in virulence and transposition.</title>
        <authorList>
            <person name="Joardar V."/>
            <person name="Lindeberg M."/>
            <person name="Jackson R.W."/>
            <person name="Selengut J."/>
            <person name="Dodson R."/>
            <person name="Brinkac L.M."/>
            <person name="Daugherty S.C."/>
            <person name="DeBoy R.T."/>
            <person name="Durkin A.S."/>
            <person name="Gwinn Giglio M."/>
            <person name="Madupu R."/>
            <person name="Nelson W.C."/>
            <person name="Rosovitz M.J."/>
            <person name="Sullivan S.A."/>
            <person name="Crabtree J."/>
            <person name="Creasy T."/>
            <person name="Davidsen T.M."/>
            <person name="Haft D.H."/>
            <person name="Zafar N."/>
            <person name="Zhou L."/>
            <person name="Halpin R."/>
            <person name="Holley T."/>
            <person name="Khouri H.M."/>
            <person name="Feldblyum T.V."/>
            <person name="White O."/>
            <person name="Fraser C.M."/>
            <person name="Chatterjee A.K."/>
            <person name="Cartinhour S."/>
            <person name="Schneider D."/>
            <person name="Mansfield J.W."/>
            <person name="Collmer A."/>
            <person name="Buell R."/>
        </authorList>
    </citation>
    <scope>NUCLEOTIDE SEQUENCE [LARGE SCALE GENOMIC DNA]</scope>
    <source>
        <strain>1448A / Race 6</strain>
    </source>
</reference>
<dbReference type="EMBL" id="CP000058">
    <property type="protein sequence ID" value="AAZ36834.1"/>
    <property type="molecule type" value="Genomic_DNA"/>
</dbReference>
<dbReference type="RefSeq" id="WP_002551735.1">
    <property type="nucleotide sequence ID" value="NC_005773.3"/>
</dbReference>
<dbReference type="SMR" id="Q48P90"/>
<dbReference type="KEGG" id="psp:PSPPH_0476"/>
<dbReference type="eggNOG" id="COG1678">
    <property type="taxonomic scope" value="Bacteria"/>
</dbReference>
<dbReference type="HOGENOM" id="CLU_057596_1_0_6"/>
<dbReference type="Proteomes" id="UP000000551">
    <property type="component" value="Chromosome"/>
</dbReference>
<dbReference type="GO" id="GO:0005829">
    <property type="term" value="C:cytosol"/>
    <property type="evidence" value="ECO:0007669"/>
    <property type="project" value="TreeGrafter"/>
</dbReference>
<dbReference type="Gene3D" id="3.40.1740.10">
    <property type="entry name" value="VC0467-like"/>
    <property type="match status" value="1"/>
</dbReference>
<dbReference type="HAMAP" id="MF_00758">
    <property type="entry name" value="UPF0301"/>
    <property type="match status" value="1"/>
</dbReference>
<dbReference type="InterPro" id="IPR003774">
    <property type="entry name" value="AlgH-like"/>
</dbReference>
<dbReference type="NCBIfam" id="NF001266">
    <property type="entry name" value="PRK00228.1-1"/>
    <property type="match status" value="1"/>
</dbReference>
<dbReference type="PANTHER" id="PTHR30327">
    <property type="entry name" value="UNCHARACTERIZED PROTEIN YQGE"/>
    <property type="match status" value="1"/>
</dbReference>
<dbReference type="PANTHER" id="PTHR30327:SF1">
    <property type="entry name" value="UPF0301 PROTEIN YQGE"/>
    <property type="match status" value="1"/>
</dbReference>
<dbReference type="Pfam" id="PF02622">
    <property type="entry name" value="DUF179"/>
    <property type="match status" value="1"/>
</dbReference>
<dbReference type="SUPFAM" id="SSF143456">
    <property type="entry name" value="VC0467-like"/>
    <property type="match status" value="1"/>
</dbReference>
<sequence>MKKVSPSYLKHQFLIAMPHMHDENFAQTLTYVVEHNANGAMGLVINRPQSLTLADVLEQLRPELPAPKRCQEIAIHSGGPVQTDRGFVLHPSGQTFQATVNLPGGISLSTSQDVLFSIADGYGPDQNVITLGYAGWDAGQLDAEMADNAWLTCSFDPAILFDVDSEQRLDAAARRLGINLNLISTQAGHA</sequence>
<name>Y476_PSE14</name>
<comment type="similarity">
    <text evidence="1">Belongs to the UPF0301 (AlgH) family.</text>
</comment>